<accession>A1JMP8</accession>
<evidence type="ECO:0000255" key="1">
    <source>
        <dbReference type="HAMAP-Rule" id="MF_00225"/>
    </source>
</evidence>
<dbReference type="EC" id="1.3.5.2" evidence="1"/>
<dbReference type="EMBL" id="AM286415">
    <property type="protein sequence ID" value="CAL11645.1"/>
    <property type="molecule type" value="Genomic_DNA"/>
</dbReference>
<dbReference type="RefSeq" id="WP_005159993.1">
    <property type="nucleotide sequence ID" value="NC_008800.1"/>
</dbReference>
<dbReference type="RefSeq" id="YP_001005861.1">
    <property type="nucleotide sequence ID" value="NC_008800.1"/>
</dbReference>
<dbReference type="SMR" id="A1JMP8"/>
<dbReference type="GeneID" id="31408606"/>
<dbReference type="KEGG" id="yen:YE1568"/>
<dbReference type="PATRIC" id="fig|393305.7.peg.1696"/>
<dbReference type="eggNOG" id="COG0167">
    <property type="taxonomic scope" value="Bacteria"/>
</dbReference>
<dbReference type="HOGENOM" id="CLU_013640_2_0_6"/>
<dbReference type="OrthoDB" id="9802377at2"/>
<dbReference type="UniPathway" id="UPA00070">
    <property type="reaction ID" value="UER00946"/>
</dbReference>
<dbReference type="Proteomes" id="UP000000642">
    <property type="component" value="Chromosome"/>
</dbReference>
<dbReference type="GO" id="GO:0005737">
    <property type="term" value="C:cytoplasm"/>
    <property type="evidence" value="ECO:0007669"/>
    <property type="project" value="InterPro"/>
</dbReference>
<dbReference type="GO" id="GO:0005886">
    <property type="term" value="C:plasma membrane"/>
    <property type="evidence" value="ECO:0007669"/>
    <property type="project" value="UniProtKB-SubCell"/>
</dbReference>
<dbReference type="GO" id="GO:0106430">
    <property type="term" value="F:dihydroorotate dehydrogenase (quinone) activity"/>
    <property type="evidence" value="ECO:0007669"/>
    <property type="project" value="UniProtKB-EC"/>
</dbReference>
<dbReference type="GO" id="GO:0006207">
    <property type="term" value="P:'de novo' pyrimidine nucleobase biosynthetic process"/>
    <property type="evidence" value="ECO:0007669"/>
    <property type="project" value="InterPro"/>
</dbReference>
<dbReference type="GO" id="GO:0044205">
    <property type="term" value="P:'de novo' UMP biosynthetic process"/>
    <property type="evidence" value="ECO:0007669"/>
    <property type="project" value="UniProtKB-UniRule"/>
</dbReference>
<dbReference type="CDD" id="cd04738">
    <property type="entry name" value="DHOD_2_like"/>
    <property type="match status" value="1"/>
</dbReference>
<dbReference type="FunFam" id="3.20.20.70:FF:000028">
    <property type="entry name" value="Dihydroorotate dehydrogenase (quinone)"/>
    <property type="match status" value="1"/>
</dbReference>
<dbReference type="Gene3D" id="3.20.20.70">
    <property type="entry name" value="Aldolase class I"/>
    <property type="match status" value="1"/>
</dbReference>
<dbReference type="HAMAP" id="MF_00225">
    <property type="entry name" value="DHO_dh_type2"/>
    <property type="match status" value="1"/>
</dbReference>
<dbReference type="InterPro" id="IPR013785">
    <property type="entry name" value="Aldolase_TIM"/>
</dbReference>
<dbReference type="InterPro" id="IPR050074">
    <property type="entry name" value="DHO_dehydrogenase"/>
</dbReference>
<dbReference type="InterPro" id="IPR012135">
    <property type="entry name" value="Dihydroorotate_DH_1_2"/>
</dbReference>
<dbReference type="InterPro" id="IPR005719">
    <property type="entry name" value="Dihydroorotate_DH_2"/>
</dbReference>
<dbReference type="InterPro" id="IPR005720">
    <property type="entry name" value="Dihydroorotate_DH_cat"/>
</dbReference>
<dbReference type="InterPro" id="IPR001295">
    <property type="entry name" value="Dihydroorotate_DH_CS"/>
</dbReference>
<dbReference type="NCBIfam" id="NF003644">
    <property type="entry name" value="PRK05286.1-1"/>
    <property type="match status" value="1"/>
</dbReference>
<dbReference type="NCBIfam" id="NF003645">
    <property type="entry name" value="PRK05286.1-2"/>
    <property type="match status" value="1"/>
</dbReference>
<dbReference type="NCBIfam" id="NF003646">
    <property type="entry name" value="PRK05286.1-4"/>
    <property type="match status" value="1"/>
</dbReference>
<dbReference type="NCBIfam" id="NF003652">
    <property type="entry name" value="PRK05286.2-5"/>
    <property type="match status" value="1"/>
</dbReference>
<dbReference type="NCBIfam" id="TIGR01036">
    <property type="entry name" value="pyrD_sub2"/>
    <property type="match status" value="1"/>
</dbReference>
<dbReference type="PANTHER" id="PTHR48109:SF4">
    <property type="entry name" value="DIHYDROOROTATE DEHYDROGENASE (QUINONE), MITOCHONDRIAL"/>
    <property type="match status" value="1"/>
</dbReference>
<dbReference type="PANTHER" id="PTHR48109">
    <property type="entry name" value="DIHYDROOROTATE DEHYDROGENASE (QUINONE), MITOCHONDRIAL-RELATED"/>
    <property type="match status" value="1"/>
</dbReference>
<dbReference type="Pfam" id="PF01180">
    <property type="entry name" value="DHO_dh"/>
    <property type="match status" value="1"/>
</dbReference>
<dbReference type="PIRSF" id="PIRSF000164">
    <property type="entry name" value="DHO_oxidase"/>
    <property type="match status" value="1"/>
</dbReference>
<dbReference type="SUPFAM" id="SSF51395">
    <property type="entry name" value="FMN-linked oxidoreductases"/>
    <property type="match status" value="1"/>
</dbReference>
<dbReference type="PROSITE" id="PS00911">
    <property type="entry name" value="DHODEHASE_1"/>
    <property type="match status" value="1"/>
</dbReference>
<dbReference type="PROSITE" id="PS00912">
    <property type="entry name" value="DHODEHASE_2"/>
    <property type="match status" value="1"/>
</dbReference>
<name>PYRD_YERE8</name>
<organism>
    <name type="scientific">Yersinia enterocolitica serotype O:8 / biotype 1B (strain NCTC 13174 / 8081)</name>
    <dbReference type="NCBI Taxonomy" id="393305"/>
    <lineage>
        <taxon>Bacteria</taxon>
        <taxon>Pseudomonadati</taxon>
        <taxon>Pseudomonadota</taxon>
        <taxon>Gammaproteobacteria</taxon>
        <taxon>Enterobacterales</taxon>
        <taxon>Yersiniaceae</taxon>
        <taxon>Yersinia</taxon>
    </lineage>
</organism>
<gene>
    <name evidence="1" type="primary">pyrD</name>
    <name type="ordered locus">YE1568</name>
</gene>
<proteinExistence type="inferred from homology"/>
<keyword id="KW-1003">Cell membrane</keyword>
<keyword id="KW-0285">Flavoprotein</keyword>
<keyword id="KW-0288">FMN</keyword>
<keyword id="KW-0472">Membrane</keyword>
<keyword id="KW-0560">Oxidoreductase</keyword>
<keyword id="KW-0665">Pyrimidine biosynthesis</keyword>
<feature type="chain" id="PRO_1000024247" description="Dihydroorotate dehydrogenase (quinone)">
    <location>
        <begin position="1"/>
        <end position="336"/>
    </location>
</feature>
<feature type="active site" description="Nucleophile" evidence="1">
    <location>
        <position position="175"/>
    </location>
</feature>
<feature type="binding site" evidence="1">
    <location>
        <begin position="62"/>
        <end position="66"/>
    </location>
    <ligand>
        <name>FMN</name>
        <dbReference type="ChEBI" id="CHEBI:58210"/>
    </ligand>
</feature>
<feature type="binding site" evidence="1">
    <location>
        <position position="66"/>
    </location>
    <ligand>
        <name>substrate</name>
    </ligand>
</feature>
<feature type="binding site" evidence="1">
    <location>
        <position position="86"/>
    </location>
    <ligand>
        <name>FMN</name>
        <dbReference type="ChEBI" id="CHEBI:58210"/>
    </ligand>
</feature>
<feature type="binding site" evidence="1">
    <location>
        <begin position="111"/>
        <end position="115"/>
    </location>
    <ligand>
        <name>substrate</name>
    </ligand>
</feature>
<feature type="binding site" evidence="1">
    <location>
        <position position="139"/>
    </location>
    <ligand>
        <name>FMN</name>
        <dbReference type="ChEBI" id="CHEBI:58210"/>
    </ligand>
</feature>
<feature type="binding site" evidence="1">
    <location>
        <position position="172"/>
    </location>
    <ligand>
        <name>FMN</name>
        <dbReference type="ChEBI" id="CHEBI:58210"/>
    </ligand>
</feature>
<feature type="binding site" evidence="1">
    <location>
        <position position="172"/>
    </location>
    <ligand>
        <name>substrate</name>
    </ligand>
</feature>
<feature type="binding site" evidence="1">
    <location>
        <position position="177"/>
    </location>
    <ligand>
        <name>substrate</name>
    </ligand>
</feature>
<feature type="binding site" evidence="1">
    <location>
        <position position="217"/>
    </location>
    <ligand>
        <name>FMN</name>
        <dbReference type="ChEBI" id="CHEBI:58210"/>
    </ligand>
</feature>
<feature type="binding site" evidence="1">
    <location>
        <position position="245"/>
    </location>
    <ligand>
        <name>FMN</name>
        <dbReference type="ChEBI" id="CHEBI:58210"/>
    </ligand>
</feature>
<feature type="binding site" evidence="1">
    <location>
        <begin position="246"/>
        <end position="247"/>
    </location>
    <ligand>
        <name>substrate</name>
    </ligand>
</feature>
<feature type="binding site" evidence="1">
    <location>
        <position position="268"/>
    </location>
    <ligand>
        <name>FMN</name>
        <dbReference type="ChEBI" id="CHEBI:58210"/>
    </ligand>
</feature>
<feature type="binding site" evidence="1">
    <location>
        <position position="297"/>
    </location>
    <ligand>
        <name>FMN</name>
        <dbReference type="ChEBI" id="CHEBI:58210"/>
    </ligand>
</feature>
<feature type="binding site" evidence="1">
    <location>
        <begin position="318"/>
        <end position="319"/>
    </location>
    <ligand>
        <name>FMN</name>
        <dbReference type="ChEBI" id="CHEBI:58210"/>
    </ligand>
</feature>
<reference key="1">
    <citation type="journal article" date="2006" name="PLoS Genet.">
        <title>The complete genome sequence and comparative genome analysis of the high pathogenicity Yersinia enterocolitica strain 8081.</title>
        <authorList>
            <person name="Thomson N.R."/>
            <person name="Howard S."/>
            <person name="Wren B.W."/>
            <person name="Holden M.T.G."/>
            <person name="Crossman L."/>
            <person name="Challis G.L."/>
            <person name="Churcher C."/>
            <person name="Mungall K."/>
            <person name="Brooks K."/>
            <person name="Chillingworth T."/>
            <person name="Feltwell T."/>
            <person name="Abdellah Z."/>
            <person name="Hauser H."/>
            <person name="Jagels K."/>
            <person name="Maddison M."/>
            <person name="Moule S."/>
            <person name="Sanders M."/>
            <person name="Whitehead S."/>
            <person name="Quail M.A."/>
            <person name="Dougan G."/>
            <person name="Parkhill J."/>
            <person name="Prentice M.B."/>
        </authorList>
    </citation>
    <scope>NUCLEOTIDE SEQUENCE [LARGE SCALE GENOMIC DNA]</scope>
    <source>
        <strain>NCTC 13174 / 8081</strain>
    </source>
</reference>
<protein>
    <recommendedName>
        <fullName evidence="1">Dihydroorotate dehydrogenase (quinone)</fullName>
        <ecNumber evidence="1">1.3.5.2</ecNumber>
    </recommendedName>
    <alternativeName>
        <fullName evidence="1">DHOdehase</fullName>
        <shortName evidence="1">DHOD</shortName>
        <shortName evidence="1">DHODase</shortName>
    </alternativeName>
    <alternativeName>
        <fullName evidence="1">Dihydroorotate oxidase</fullName>
    </alternativeName>
</protein>
<comment type="function">
    <text evidence="1">Catalyzes the conversion of dihydroorotate to orotate with quinone as electron acceptor.</text>
</comment>
<comment type="catalytic activity">
    <reaction evidence="1">
        <text>(S)-dihydroorotate + a quinone = orotate + a quinol</text>
        <dbReference type="Rhea" id="RHEA:30187"/>
        <dbReference type="ChEBI" id="CHEBI:24646"/>
        <dbReference type="ChEBI" id="CHEBI:30839"/>
        <dbReference type="ChEBI" id="CHEBI:30864"/>
        <dbReference type="ChEBI" id="CHEBI:132124"/>
        <dbReference type="EC" id="1.3.5.2"/>
    </reaction>
</comment>
<comment type="cofactor">
    <cofactor evidence="1">
        <name>FMN</name>
        <dbReference type="ChEBI" id="CHEBI:58210"/>
    </cofactor>
    <text evidence="1">Binds 1 FMN per subunit.</text>
</comment>
<comment type="pathway">
    <text evidence="1">Pyrimidine metabolism; UMP biosynthesis via de novo pathway; orotate from (S)-dihydroorotate (quinone route): step 1/1.</text>
</comment>
<comment type="subunit">
    <text evidence="1">Monomer.</text>
</comment>
<comment type="subcellular location">
    <subcellularLocation>
        <location evidence="1">Cell membrane</location>
        <topology evidence="1">Peripheral membrane protein</topology>
    </subcellularLocation>
</comment>
<comment type="similarity">
    <text evidence="1">Belongs to the dihydroorotate dehydrogenase family. Type 2 subfamily.</text>
</comment>
<sequence length="336" mass="36773">MYYPLVKKALFQLDPERAHEFTFRQLKRLTGTPLQFLVSQSVPTKPVSCMGLSFKNPLGLAAGLDKDGECIDALGAMGFGFIEVGTVTPKPQSGNDKPRLFRIVEAEGLINRMGFNNHGVDNLIENVKKSHFGGILGINIGKNKDTPVEQGKEDYLICMDKVYPYAGYIAINISSPNTPGLRSLQYGEALDDLLAAIKNKQTELHQRHHKYVPVAVKIAPDLTEEELIQIADSLVRHNIDGVIATNTTLDRSLIQGLNYCEQAGGLSGRPLQLRSTEVIRRLSQELQGRLPIIGVGGIDSVTAAREKMAAGASLIQIYSGFIFRGPGLIKNIVTHI</sequence>